<organism>
    <name type="scientific">Methylobacterium sp. (strain 4-46)</name>
    <dbReference type="NCBI Taxonomy" id="426117"/>
    <lineage>
        <taxon>Bacteria</taxon>
        <taxon>Pseudomonadati</taxon>
        <taxon>Pseudomonadota</taxon>
        <taxon>Alphaproteobacteria</taxon>
        <taxon>Hyphomicrobiales</taxon>
        <taxon>Methylobacteriaceae</taxon>
        <taxon>Methylobacterium</taxon>
    </lineage>
</organism>
<evidence type="ECO:0000255" key="1">
    <source>
        <dbReference type="HAMAP-Rule" id="MF_00366"/>
    </source>
</evidence>
<evidence type="ECO:0000256" key="2">
    <source>
        <dbReference type="SAM" id="MobiDB-lite"/>
    </source>
</evidence>
<accession>B0UN75</accession>
<comment type="function">
    <text evidence="1">Promotes RNA polymerase assembly. Latches the N- and C-terminal regions of the beta' subunit thereby facilitating its interaction with the beta and alpha subunits.</text>
</comment>
<comment type="catalytic activity">
    <reaction evidence="1">
        <text>RNA(n) + a ribonucleoside 5'-triphosphate = RNA(n+1) + diphosphate</text>
        <dbReference type="Rhea" id="RHEA:21248"/>
        <dbReference type="Rhea" id="RHEA-COMP:14527"/>
        <dbReference type="Rhea" id="RHEA-COMP:17342"/>
        <dbReference type="ChEBI" id="CHEBI:33019"/>
        <dbReference type="ChEBI" id="CHEBI:61557"/>
        <dbReference type="ChEBI" id="CHEBI:140395"/>
        <dbReference type="EC" id="2.7.7.6"/>
    </reaction>
</comment>
<comment type="subunit">
    <text evidence="1">The RNAP catalytic core consists of 2 alpha, 1 beta, 1 beta' and 1 omega subunit. When a sigma factor is associated with the core the holoenzyme is formed, which can initiate transcription.</text>
</comment>
<comment type="similarity">
    <text evidence="1">Belongs to the RNA polymerase subunit omega family.</text>
</comment>
<dbReference type="EC" id="2.7.7.6" evidence="1"/>
<dbReference type="EMBL" id="CP000943">
    <property type="protein sequence ID" value="ACA14618.1"/>
    <property type="molecule type" value="Genomic_DNA"/>
</dbReference>
<dbReference type="RefSeq" id="WP_012330036.1">
    <property type="nucleotide sequence ID" value="NC_010511.1"/>
</dbReference>
<dbReference type="SMR" id="B0UN75"/>
<dbReference type="STRING" id="426117.M446_0030"/>
<dbReference type="KEGG" id="met:M446_0030"/>
<dbReference type="eggNOG" id="COG1758">
    <property type="taxonomic scope" value="Bacteria"/>
</dbReference>
<dbReference type="HOGENOM" id="CLU_125406_2_0_5"/>
<dbReference type="GO" id="GO:0000428">
    <property type="term" value="C:DNA-directed RNA polymerase complex"/>
    <property type="evidence" value="ECO:0007669"/>
    <property type="project" value="UniProtKB-KW"/>
</dbReference>
<dbReference type="GO" id="GO:0003677">
    <property type="term" value="F:DNA binding"/>
    <property type="evidence" value="ECO:0007669"/>
    <property type="project" value="UniProtKB-UniRule"/>
</dbReference>
<dbReference type="GO" id="GO:0003899">
    <property type="term" value="F:DNA-directed RNA polymerase activity"/>
    <property type="evidence" value="ECO:0007669"/>
    <property type="project" value="UniProtKB-UniRule"/>
</dbReference>
<dbReference type="GO" id="GO:0006351">
    <property type="term" value="P:DNA-templated transcription"/>
    <property type="evidence" value="ECO:0007669"/>
    <property type="project" value="UniProtKB-UniRule"/>
</dbReference>
<dbReference type="Gene3D" id="3.90.940.10">
    <property type="match status" value="1"/>
</dbReference>
<dbReference type="HAMAP" id="MF_00366">
    <property type="entry name" value="RNApol_bact_RpoZ"/>
    <property type="match status" value="1"/>
</dbReference>
<dbReference type="InterPro" id="IPR003716">
    <property type="entry name" value="DNA-dir_RNA_pol_omega"/>
</dbReference>
<dbReference type="InterPro" id="IPR006110">
    <property type="entry name" value="Pol_omega/Rpo6/RPB6"/>
</dbReference>
<dbReference type="InterPro" id="IPR036161">
    <property type="entry name" value="RPB6/omega-like_sf"/>
</dbReference>
<dbReference type="NCBIfam" id="TIGR00690">
    <property type="entry name" value="rpoZ"/>
    <property type="match status" value="1"/>
</dbReference>
<dbReference type="PANTHER" id="PTHR34476">
    <property type="entry name" value="DNA-DIRECTED RNA POLYMERASE SUBUNIT OMEGA"/>
    <property type="match status" value="1"/>
</dbReference>
<dbReference type="PANTHER" id="PTHR34476:SF1">
    <property type="entry name" value="DNA-DIRECTED RNA POLYMERASE SUBUNIT OMEGA"/>
    <property type="match status" value="1"/>
</dbReference>
<dbReference type="Pfam" id="PF01192">
    <property type="entry name" value="RNA_pol_Rpb6"/>
    <property type="match status" value="1"/>
</dbReference>
<dbReference type="SMART" id="SM01409">
    <property type="entry name" value="RNA_pol_Rpb6"/>
    <property type="match status" value="1"/>
</dbReference>
<dbReference type="SUPFAM" id="SSF63562">
    <property type="entry name" value="RPB6/omega subunit-like"/>
    <property type="match status" value="1"/>
</dbReference>
<name>RPOZ_METS4</name>
<protein>
    <recommendedName>
        <fullName evidence="1">DNA-directed RNA polymerase subunit omega</fullName>
        <shortName evidence="1">RNAP omega subunit</shortName>
        <ecNumber evidence="1">2.7.7.6</ecNumber>
    </recommendedName>
    <alternativeName>
        <fullName evidence="1">RNA polymerase omega subunit</fullName>
    </alternativeName>
    <alternativeName>
        <fullName evidence="1">Transcriptase subunit omega</fullName>
    </alternativeName>
</protein>
<reference key="1">
    <citation type="submission" date="2008-02" db="EMBL/GenBank/DDBJ databases">
        <title>Complete sequence of chromosome of Methylobacterium sp. 4-46.</title>
        <authorList>
            <consortium name="US DOE Joint Genome Institute"/>
            <person name="Copeland A."/>
            <person name="Lucas S."/>
            <person name="Lapidus A."/>
            <person name="Glavina del Rio T."/>
            <person name="Dalin E."/>
            <person name="Tice H."/>
            <person name="Bruce D."/>
            <person name="Goodwin L."/>
            <person name="Pitluck S."/>
            <person name="Chertkov O."/>
            <person name="Brettin T."/>
            <person name="Detter J.C."/>
            <person name="Han C."/>
            <person name="Kuske C.R."/>
            <person name="Schmutz J."/>
            <person name="Larimer F."/>
            <person name="Land M."/>
            <person name="Hauser L."/>
            <person name="Kyrpides N."/>
            <person name="Ivanova N."/>
            <person name="Marx C.J."/>
            <person name="Richardson P."/>
        </authorList>
    </citation>
    <scope>NUCLEOTIDE SEQUENCE [LARGE SCALE GENOMIC DNA]</scope>
    <source>
        <strain>4-46</strain>
    </source>
</reference>
<keyword id="KW-0240">DNA-directed RNA polymerase</keyword>
<keyword id="KW-0548">Nucleotidyltransferase</keyword>
<keyword id="KW-0804">Transcription</keyword>
<keyword id="KW-0808">Transferase</keyword>
<proteinExistence type="inferred from homology"/>
<gene>
    <name evidence="1" type="primary">rpoZ</name>
    <name type="ordered locus">M446_0030</name>
</gene>
<sequence length="137" mass="15003">MARVTVEDCIDKVENRFELVLLAGHRARLLSSGAPLTVDRDRDKNPVVALREIADETITPDDLKEQLIHSLQKYVEVDEPEPEAVPLLSSSPAAAAVAPQAASGDDNDIQFDRMSEEDLLRGLENLAPPTETEDEGD</sequence>
<feature type="chain" id="PRO_1000121247" description="DNA-directed RNA polymerase subunit omega">
    <location>
        <begin position="1"/>
        <end position="137"/>
    </location>
</feature>
<feature type="region of interest" description="Disordered" evidence="2">
    <location>
        <begin position="78"/>
        <end position="137"/>
    </location>
</feature>
<feature type="compositionally biased region" description="Low complexity" evidence="2">
    <location>
        <begin position="84"/>
        <end position="103"/>
    </location>
</feature>
<feature type="compositionally biased region" description="Basic and acidic residues" evidence="2">
    <location>
        <begin position="110"/>
        <end position="121"/>
    </location>
</feature>